<protein>
    <recommendedName>
        <fullName>Histone-lysine N-methyltransferase EZ3</fullName>
        <ecNumber>2.1.1.356</ecNumber>
    </recommendedName>
    <alternativeName>
        <fullName>Enhancer of zeste protein 3</fullName>
    </alternativeName>
</protein>
<proteinExistence type="evidence at transcript level"/>
<accession>Q8S4P4</accession>
<organism>
    <name type="scientific">Zea mays</name>
    <name type="common">Maize</name>
    <dbReference type="NCBI Taxonomy" id="4577"/>
    <lineage>
        <taxon>Eukaryota</taxon>
        <taxon>Viridiplantae</taxon>
        <taxon>Streptophyta</taxon>
        <taxon>Embryophyta</taxon>
        <taxon>Tracheophyta</taxon>
        <taxon>Spermatophyta</taxon>
        <taxon>Magnoliopsida</taxon>
        <taxon>Liliopsida</taxon>
        <taxon>Poales</taxon>
        <taxon>Poaceae</taxon>
        <taxon>PACMAD clade</taxon>
        <taxon>Panicoideae</taxon>
        <taxon>Andropogonodae</taxon>
        <taxon>Andropogoneae</taxon>
        <taxon>Tripsacinae</taxon>
        <taxon>Zea</taxon>
    </lineage>
</organism>
<reference key="1">
    <citation type="journal article" date="2002" name="Plant Physiol.">
        <title>Sequence relationships, conserved domains, and expression patterns for maize homologs of the Polycomb group genes E(z), esc, and E(Pc).</title>
        <authorList>
            <person name="Springer N.M."/>
            <person name="Danilevskaya O.N."/>
            <person name="Hermon P."/>
            <person name="Helentjaris T.G."/>
            <person name="Phillips R.L."/>
            <person name="Kaeppler H.F."/>
            <person name="Kaeppler S.M."/>
        </authorList>
    </citation>
    <scope>NUCLEOTIDE SEQUENCE [MRNA]</scope>
    <scope>TISSUE SPECIFICITY</scope>
    <source>
        <tissue>Seed</tissue>
    </source>
</reference>
<comment type="function">
    <text evidence="1">Polycomb group (PcG) protein. Catalytic subunit of some PcG multiprotein complex, which methylates 'Lys-27' of histone H3, leading to transcriptional repression of the affected target genes. PcG proteins are not required to initiate repression, but to maintain it during later stages of development (By similarity).</text>
</comment>
<comment type="catalytic activity">
    <reaction evidence="3">
        <text>L-lysyl(27)-[histone H3] + 3 S-adenosyl-L-methionine = N(6),N(6),N(6)-trimethyl-L-lysyl(27)-[histone H3] + 3 S-adenosyl-L-homocysteine + 3 H(+)</text>
        <dbReference type="Rhea" id="RHEA:60292"/>
        <dbReference type="Rhea" id="RHEA-COMP:15535"/>
        <dbReference type="Rhea" id="RHEA-COMP:15548"/>
        <dbReference type="ChEBI" id="CHEBI:15378"/>
        <dbReference type="ChEBI" id="CHEBI:29969"/>
        <dbReference type="ChEBI" id="CHEBI:57856"/>
        <dbReference type="ChEBI" id="CHEBI:59789"/>
        <dbReference type="ChEBI" id="CHEBI:61961"/>
        <dbReference type="EC" id="2.1.1.356"/>
    </reaction>
</comment>
<comment type="subcellular location">
    <subcellularLocation>
        <location evidence="7">Nucleus</location>
    </subcellularLocation>
</comment>
<comment type="tissue specificity">
    <text evidence="6">Widely expressed.</text>
</comment>
<comment type="similarity">
    <text evidence="3">Belongs to the class V-like SAM-binding methyltransferase superfamily. Histone-lysine methyltransferase family. EZ subfamily.</text>
</comment>
<feature type="chain" id="PRO_0000214000" description="Histone-lysine N-methyltransferase EZ3">
    <location>
        <begin position="1"/>
        <end position="895"/>
    </location>
</feature>
<feature type="domain" description="SANT">
    <location>
        <begin position="528"/>
        <end position="578"/>
    </location>
</feature>
<feature type="domain" description="CXC" evidence="4">
    <location>
        <begin position="628"/>
        <end position="732"/>
    </location>
</feature>
<feature type="domain" description="SET" evidence="2">
    <location>
        <begin position="747"/>
        <end position="862"/>
    </location>
</feature>
<feature type="region of interest" description="Disordered" evidence="5">
    <location>
        <begin position="1"/>
        <end position="30"/>
    </location>
</feature>
<feature type="region of interest" description="Disordered" evidence="5">
    <location>
        <begin position="396"/>
        <end position="446"/>
    </location>
</feature>
<feature type="region of interest" description="Disordered" evidence="5">
    <location>
        <begin position="870"/>
        <end position="895"/>
    </location>
</feature>
<feature type="compositionally biased region" description="Low complexity" evidence="5">
    <location>
        <begin position="1"/>
        <end position="13"/>
    </location>
</feature>
<feature type="compositionally biased region" description="Polar residues" evidence="5">
    <location>
        <begin position="396"/>
        <end position="422"/>
    </location>
</feature>
<feature type="compositionally biased region" description="Basic residues" evidence="5">
    <location>
        <begin position="427"/>
        <end position="436"/>
    </location>
</feature>
<feature type="compositionally biased region" description="Basic and acidic residues" evidence="5">
    <location>
        <begin position="873"/>
        <end position="885"/>
    </location>
</feature>
<feature type="compositionally biased region" description="Basic residues" evidence="5">
    <location>
        <begin position="886"/>
        <end position="895"/>
    </location>
</feature>
<gene>
    <name type="primary">EZ3</name>
    <name type="synonym">MEZ3</name>
</gene>
<dbReference type="EC" id="2.1.1.356"/>
<dbReference type="EMBL" id="AF443598">
    <property type="protein sequence ID" value="AAM13422.1"/>
    <property type="molecule type" value="mRNA"/>
</dbReference>
<dbReference type="RefSeq" id="NP_001105079.1">
    <property type="nucleotide sequence ID" value="NM_001111609.1"/>
</dbReference>
<dbReference type="SMR" id="Q8S4P4"/>
<dbReference type="FunCoup" id="Q8S4P4">
    <property type="interactions" value="1135"/>
</dbReference>
<dbReference type="STRING" id="4577.Q8S4P4"/>
<dbReference type="PaxDb" id="4577-GRMZM2G043484_P02"/>
<dbReference type="GeneID" id="541955"/>
<dbReference type="KEGG" id="zma:541955"/>
<dbReference type="MaizeGDB" id="754846"/>
<dbReference type="eggNOG" id="KOG1079">
    <property type="taxonomic scope" value="Eukaryota"/>
</dbReference>
<dbReference type="InParanoid" id="Q8S4P4"/>
<dbReference type="OrthoDB" id="6141102at2759"/>
<dbReference type="Proteomes" id="UP000007305">
    <property type="component" value="Unplaced"/>
</dbReference>
<dbReference type="ExpressionAtlas" id="Q8S4P4">
    <property type="expression patterns" value="baseline and differential"/>
</dbReference>
<dbReference type="GO" id="GO:0005634">
    <property type="term" value="C:nucleus"/>
    <property type="evidence" value="ECO:0000318"/>
    <property type="project" value="GO_Central"/>
</dbReference>
<dbReference type="GO" id="GO:0031519">
    <property type="term" value="C:PcG protein complex"/>
    <property type="evidence" value="ECO:0007669"/>
    <property type="project" value="InterPro"/>
</dbReference>
<dbReference type="GO" id="GO:0003682">
    <property type="term" value="F:chromatin binding"/>
    <property type="evidence" value="ECO:0000318"/>
    <property type="project" value="GO_Central"/>
</dbReference>
<dbReference type="GO" id="GO:0046976">
    <property type="term" value="F:histone H3K27 methyltransferase activity"/>
    <property type="evidence" value="ECO:0000318"/>
    <property type="project" value="GO_Central"/>
</dbReference>
<dbReference type="GO" id="GO:0140951">
    <property type="term" value="F:histone H3K27 trimethyltransferase activity"/>
    <property type="evidence" value="ECO:0007669"/>
    <property type="project" value="UniProtKB-EC"/>
</dbReference>
<dbReference type="GO" id="GO:0031507">
    <property type="term" value="P:heterochromatin formation"/>
    <property type="evidence" value="ECO:0000318"/>
    <property type="project" value="GO_Central"/>
</dbReference>
<dbReference type="GO" id="GO:0032259">
    <property type="term" value="P:methylation"/>
    <property type="evidence" value="ECO:0007669"/>
    <property type="project" value="UniProtKB-KW"/>
</dbReference>
<dbReference type="CDD" id="cd00167">
    <property type="entry name" value="SANT"/>
    <property type="match status" value="1"/>
</dbReference>
<dbReference type="CDD" id="cd10519">
    <property type="entry name" value="SET_EZH"/>
    <property type="match status" value="1"/>
</dbReference>
<dbReference type="FunFam" id="2.170.270.10:FF:000001">
    <property type="entry name" value="Putative histone-lysine N-methyltransferase EZH2"/>
    <property type="match status" value="1"/>
</dbReference>
<dbReference type="Gene3D" id="2.170.270.10">
    <property type="entry name" value="SET domain"/>
    <property type="match status" value="1"/>
</dbReference>
<dbReference type="InterPro" id="IPR026489">
    <property type="entry name" value="CXC_dom"/>
</dbReference>
<dbReference type="InterPro" id="IPR045318">
    <property type="entry name" value="EZH1/2-like"/>
</dbReference>
<dbReference type="InterPro" id="IPR025778">
    <property type="entry name" value="Hist-Lys_N-MeTrfase_plant"/>
</dbReference>
<dbReference type="InterPro" id="IPR041355">
    <property type="entry name" value="Pre-SET_CXC"/>
</dbReference>
<dbReference type="InterPro" id="IPR001005">
    <property type="entry name" value="SANT/Myb"/>
</dbReference>
<dbReference type="InterPro" id="IPR001214">
    <property type="entry name" value="SET_dom"/>
</dbReference>
<dbReference type="InterPro" id="IPR046341">
    <property type="entry name" value="SET_dom_sf"/>
</dbReference>
<dbReference type="InterPro" id="IPR033467">
    <property type="entry name" value="Tesmin/TSO1-like_CXC"/>
</dbReference>
<dbReference type="PANTHER" id="PTHR45747">
    <property type="entry name" value="HISTONE-LYSINE N-METHYLTRANSFERASE E(Z)"/>
    <property type="match status" value="1"/>
</dbReference>
<dbReference type="PANTHER" id="PTHR45747:SF14">
    <property type="entry name" value="HISTONE-LYSINE N-METHYLTRANSFERASE EZA1"/>
    <property type="match status" value="1"/>
</dbReference>
<dbReference type="Pfam" id="PF18264">
    <property type="entry name" value="preSET_CXC"/>
    <property type="match status" value="1"/>
</dbReference>
<dbReference type="Pfam" id="PF00856">
    <property type="entry name" value="SET"/>
    <property type="match status" value="1"/>
</dbReference>
<dbReference type="SMART" id="SM01114">
    <property type="entry name" value="CXC"/>
    <property type="match status" value="1"/>
</dbReference>
<dbReference type="SMART" id="SM00317">
    <property type="entry name" value="SET"/>
    <property type="match status" value="1"/>
</dbReference>
<dbReference type="SUPFAM" id="SSF82199">
    <property type="entry name" value="SET domain"/>
    <property type="match status" value="1"/>
</dbReference>
<dbReference type="PROSITE" id="PS51633">
    <property type="entry name" value="CXC"/>
    <property type="match status" value="1"/>
</dbReference>
<dbReference type="PROSITE" id="PS51576">
    <property type="entry name" value="SAM_MT43_EZ"/>
    <property type="match status" value="1"/>
</dbReference>
<dbReference type="PROSITE" id="PS50280">
    <property type="entry name" value="SET"/>
    <property type="match status" value="1"/>
</dbReference>
<sequence>MASSSKASDSSSQRSKRSDQGTGREAAPASVVPIHGNLTQLIRQIKSRRLLYIKEKLEANRKTLQRHSCSLFDVAAAAEVASRGSDGGNALSQRAAEGQFRLAGSDLAHGIGERDVVYMQEENLASGTLVLSSSGAAAQRTVVRFVKLPLVERIPPYTTWIFLDKNQRMADDQSVVGRRRIYYDPVGNEALICSDSDEEIPEPEEEKHFFTEGEDQLIWRATQEHGLNREVVNVLCQFIDSTPSEIEERSEVLFEKNEKNSGSSDKIERQLSLDKTMDAVLDSFDNLFCRRCLVFDCRLHGCSQNLVFPTEKQPYSFEPDENKKPCGRQCYLRWRGGFQEIHDVGLSGCATYNMESGTVSHKVDVSIMSESEDSNREKGNIRSMTLVGTSGSKIISSVSAEESTTPPSADTSETENASSDMPPSSLRKYKISKRGPRYRERSPGKRQKVFTSDISFASNILNKLSIPEIRDTRLESREPGGDKLQILDESTKKTSSKDICGESPITTTENMGIESKKVSSTKNFLEHTLSCWSALERDLYLKGIEIFGKNSCLIARNLLSGMKTCMEVANYMYNNGAAMAKRPLLNKSISGDFAETEQDYMEQDMVARTRIYRRRGRNRKLKYTWKSAGHPTVRKRIGDGKQWYTQYNPCVCQQMCGKDCPCVENGTCCEKYCGCSKSCKNKFRGCHCAKSQCRSRQCPCFAASRECDPDVCRNCWVSCGDGSLGEPPARGDGYQCGNMKLLLKQQQRILLGRSDVAGWGAFIKNPVNKNDYLGEYTGELISHKEADKRGKIYDRANSSFLFDLNDQYVLDAYRKGDKLKFANHSSNPNCYAKVMLVAGDHRVGIYAKEHIEASEELFYDYRYGPDQAPAWARRPEGSKKDEASVSHHRAHKVAR</sequence>
<name>EZ3_MAIZE</name>
<evidence type="ECO:0000250" key="1"/>
<evidence type="ECO:0000255" key="2">
    <source>
        <dbReference type="PROSITE-ProRule" id="PRU00190"/>
    </source>
</evidence>
<evidence type="ECO:0000255" key="3">
    <source>
        <dbReference type="PROSITE-ProRule" id="PRU00909"/>
    </source>
</evidence>
<evidence type="ECO:0000255" key="4">
    <source>
        <dbReference type="PROSITE-ProRule" id="PRU00970"/>
    </source>
</evidence>
<evidence type="ECO:0000256" key="5">
    <source>
        <dbReference type="SAM" id="MobiDB-lite"/>
    </source>
</evidence>
<evidence type="ECO:0000269" key="6">
    <source>
    </source>
</evidence>
<evidence type="ECO:0000305" key="7"/>
<keyword id="KW-0489">Methyltransferase</keyword>
<keyword id="KW-0539">Nucleus</keyword>
<keyword id="KW-1185">Reference proteome</keyword>
<keyword id="KW-0678">Repressor</keyword>
<keyword id="KW-0949">S-adenosyl-L-methionine</keyword>
<keyword id="KW-0804">Transcription</keyword>
<keyword id="KW-0805">Transcription regulation</keyword>
<keyword id="KW-0808">Transferase</keyword>